<dbReference type="EMBL" id="Z49402">
    <property type="status" value="NOT_ANNOTATED_CDS"/>
    <property type="molecule type" value="Genomic_DNA"/>
</dbReference>
<dbReference type="EMBL" id="Z49403">
    <property type="status" value="NOT_ANNOTATED_CDS"/>
    <property type="molecule type" value="Genomic_DNA"/>
</dbReference>
<dbReference type="SMR" id="P0C5P1"/>
<dbReference type="IntAct" id="P0C5P1">
    <property type="interactions" value="1"/>
</dbReference>
<dbReference type="STRING" id="4932.YJL127W-A"/>
<dbReference type="PaxDb" id="4932-YJL127W-A"/>
<dbReference type="EnsemblFungi" id="YJL127W-A_mRNA">
    <property type="protein sequence ID" value="YJL127W-A"/>
    <property type="gene ID" value="YJL127W-A"/>
</dbReference>
<dbReference type="AGR" id="SGD:S000007612"/>
<dbReference type="SGD" id="S000007612">
    <property type="gene designation" value="YJL127W-A"/>
</dbReference>
<dbReference type="HOGENOM" id="CLU_3335854_0_0_1"/>
<protein>
    <recommendedName>
        <fullName>Putative uncharacterized protein YJL127W-A</fullName>
    </recommendedName>
</protein>
<sequence length="38" mass="4051">MTLMSGEGQGKSSSVKRVPTIAATLVFFFSNSFLPASR</sequence>
<accession>P0C5P1</accession>
<evidence type="ECO:0000305" key="1">
    <source>
    </source>
</evidence>
<gene>
    <name type="ordered locus">YJL127W-A</name>
    <name type="ORF">YJL127W-B</name>
</gene>
<name>YJ27A_YEAST</name>
<proteinExistence type="uncertain"/>
<organism>
    <name type="scientific">Saccharomyces cerevisiae (strain ATCC 204508 / S288c)</name>
    <name type="common">Baker's yeast</name>
    <dbReference type="NCBI Taxonomy" id="559292"/>
    <lineage>
        <taxon>Eukaryota</taxon>
        <taxon>Fungi</taxon>
        <taxon>Dikarya</taxon>
        <taxon>Ascomycota</taxon>
        <taxon>Saccharomycotina</taxon>
        <taxon>Saccharomycetes</taxon>
        <taxon>Saccharomycetales</taxon>
        <taxon>Saccharomycetaceae</taxon>
        <taxon>Saccharomyces</taxon>
    </lineage>
</organism>
<reference key="1">
    <citation type="journal article" date="1996" name="EMBO J.">
        <title>Complete nucleotide sequence of Saccharomyces cerevisiae chromosome X.</title>
        <authorList>
            <person name="Galibert F."/>
            <person name="Alexandraki D."/>
            <person name="Baur A."/>
            <person name="Boles E."/>
            <person name="Chalwatzis N."/>
            <person name="Chuat J.-C."/>
            <person name="Coster F."/>
            <person name="Cziepluch C."/>
            <person name="de Haan M."/>
            <person name="Domdey H."/>
            <person name="Durand P."/>
            <person name="Entian K.-D."/>
            <person name="Gatius M."/>
            <person name="Goffeau A."/>
            <person name="Grivell L.A."/>
            <person name="Hennemann A."/>
            <person name="Herbert C.J."/>
            <person name="Heumann K."/>
            <person name="Hilger F."/>
            <person name="Hollenberg C.P."/>
            <person name="Huang M.-E."/>
            <person name="Jacq C."/>
            <person name="Jauniaux J.-C."/>
            <person name="Katsoulou C."/>
            <person name="Kirchrath L."/>
            <person name="Kleine K."/>
            <person name="Kordes E."/>
            <person name="Koetter P."/>
            <person name="Liebl S."/>
            <person name="Louis E.J."/>
            <person name="Manus V."/>
            <person name="Mewes H.-W."/>
            <person name="Miosga T."/>
            <person name="Obermaier B."/>
            <person name="Perea J."/>
            <person name="Pohl T.M."/>
            <person name="Portetelle D."/>
            <person name="Pujol A."/>
            <person name="Purnelle B."/>
            <person name="Ramezani Rad M."/>
            <person name="Rasmussen S.W."/>
            <person name="Rose M."/>
            <person name="Rossau R."/>
            <person name="Schaaff-Gerstenschlaeger I."/>
            <person name="Smits P.H.M."/>
            <person name="Scarcez T."/>
            <person name="Soriano N."/>
            <person name="To Van D."/>
            <person name="Tzermia M."/>
            <person name="Van Broekhoven A."/>
            <person name="Vandenbol M."/>
            <person name="Wedler H."/>
            <person name="von Wettstein D."/>
            <person name="Wambutt R."/>
            <person name="Zagulski M."/>
            <person name="Zollner A."/>
            <person name="Karpfinger-Hartl L."/>
        </authorList>
    </citation>
    <scope>NUCLEOTIDE SEQUENCE [LARGE SCALE GENOMIC DNA]</scope>
    <source>
        <strain>ATCC 204508 / S288c</strain>
    </source>
</reference>
<reference key="2">
    <citation type="journal article" date="2014" name="G3 (Bethesda)">
        <title>The reference genome sequence of Saccharomyces cerevisiae: Then and now.</title>
        <authorList>
            <person name="Engel S.R."/>
            <person name="Dietrich F.S."/>
            <person name="Fisk D.G."/>
            <person name="Binkley G."/>
            <person name="Balakrishnan R."/>
            <person name="Costanzo M.C."/>
            <person name="Dwight S.S."/>
            <person name="Hitz B.C."/>
            <person name="Karra K."/>
            <person name="Nash R.S."/>
            <person name="Weng S."/>
            <person name="Wong E.D."/>
            <person name="Lloyd P."/>
            <person name="Skrzypek M.S."/>
            <person name="Miyasato S.R."/>
            <person name="Simison M."/>
            <person name="Cherry J.M."/>
        </authorList>
    </citation>
    <scope>GENOME REANNOTATION</scope>
    <source>
        <strain>ATCC 204508 / S288c</strain>
    </source>
</reference>
<reference key="3">
    <citation type="journal article" date="2000" name="FEBS Lett.">
        <title>Genomic exploration of the hemiascomycetous yeasts: 4. The genome of Saccharomyces cerevisiae revisited.</title>
        <authorList>
            <person name="Blandin G."/>
            <person name="Durrens P."/>
            <person name="Tekaia F."/>
            <person name="Aigle M."/>
            <person name="Bolotin-Fukuhara M."/>
            <person name="Bon E."/>
            <person name="Casaregola S."/>
            <person name="de Montigny J."/>
            <person name="Gaillardin C."/>
            <person name="Lepingle A."/>
            <person name="Llorente B."/>
            <person name="Malpertuy A."/>
            <person name="Neuveglise C."/>
            <person name="Ozier-Kalogeropoulos O."/>
            <person name="Perrin A."/>
            <person name="Potier S."/>
            <person name="Souciet J.-L."/>
            <person name="Talla E."/>
            <person name="Toffano-Nioche C."/>
            <person name="Wesolowski-Louvel M."/>
            <person name="Marck C."/>
            <person name="Dujon B."/>
        </authorList>
    </citation>
    <scope>GENOME REANNOTATION</scope>
</reference>
<comment type="caution">
    <text evidence="1">Product of a dubious gene prediction unlikely to encode a functional protein. Because of that it is not part of the S.cerevisiae S288c complete/reference proteome set.</text>
</comment>
<feature type="chain" id="PRO_0000309039" description="Putative uncharacterized protein YJL127W-A">
    <location>
        <begin position="1"/>
        <end position="38"/>
    </location>
</feature>